<evidence type="ECO:0000255" key="1">
    <source>
        <dbReference type="HAMAP-Rule" id="MF_00074"/>
    </source>
</evidence>
<accession>B2GF22</accession>
<reference key="1">
    <citation type="journal article" date="2008" name="DNA Res.">
        <title>Comparative genome analysis of Lactobacillus reuteri and Lactobacillus fermentum reveal a genomic island for reuterin and cobalamin production.</title>
        <authorList>
            <person name="Morita H."/>
            <person name="Toh H."/>
            <person name="Fukuda S."/>
            <person name="Horikawa H."/>
            <person name="Oshima K."/>
            <person name="Suzuki T."/>
            <person name="Murakami M."/>
            <person name="Hisamatsu S."/>
            <person name="Kato Y."/>
            <person name="Takizawa T."/>
            <person name="Fukuoka H."/>
            <person name="Yoshimura T."/>
            <person name="Itoh K."/>
            <person name="O'Sullivan D.J."/>
            <person name="McKay L.L."/>
            <person name="Ohno H."/>
            <person name="Kikuchi J."/>
            <person name="Masaoka T."/>
            <person name="Hattori M."/>
        </authorList>
    </citation>
    <scope>NUCLEOTIDE SEQUENCE [LARGE SCALE GENOMIC DNA]</scope>
    <source>
        <strain>NBRC 3956 / LMG 18251</strain>
    </source>
</reference>
<proteinExistence type="inferred from homology"/>
<keyword id="KW-0963">Cytoplasm</keyword>
<keyword id="KW-0489">Methyltransferase</keyword>
<keyword id="KW-1185">Reference proteome</keyword>
<keyword id="KW-0698">rRNA processing</keyword>
<keyword id="KW-0949">S-adenosyl-L-methionine</keyword>
<keyword id="KW-0808">Transferase</keyword>
<gene>
    <name evidence="1" type="primary">rsmG</name>
    <name type="ordered locus">LAF_0075</name>
</gene>
<organism>
    <name type="scientific">Limosilactobacillus fermentum (strain NBRC 3956 / LMG 18251)</name>
    <name type="common">Lactobacillus fermentum</name>
    <dbReference type="NCBI Taxonomy" id="334390"/>
    <lineage>
        <taxon>Bacteria</taxon>
        <taxon>Bacillati</taxon>
        <taxon>Bacillota</taxon>
        <taxon>Bacilli</taxon>
        <taxon>Lactobacillales</taxon>
        <taxon>Lactobacillaceae</taxon>
        <taxon>Limosilactobacillus</taxon>
    </lineage>
</organism>
<feature type="chain" id="PRO_1000092632" description="Ribosomal RNA small subunit methyltransferase G">
    <location>
        <begin position="1"/>
        <end position="245"/>
    </location>
</feature>
<feature type="binding site" evidence="1">
    <location>
        <position position="79"/>
    </location>
    <ligand>
        <name>S-adenosyl-L-methionine</name>
        <dbReference type="ChEBI" id="CHEBI:59789"/>
    </ligand>
</feature>
<feature type="binding site" evidence="1">
    <location>
        <position position="84"/>
    </location>
    <ligand>
        <name>S-adenosyl-L-methionine</name>
        <dbReference type="ChEBI" id="CHEBI:59789"/>
    </ligand>
</feature>
<feature type="binding site" evidence="1">
    <location>
        <begin position="130"/>
        <end position="131"/>
    </location>
    <ligand>
        <name>S-adenosyl-L-methionine</name>
        <dbReference type="ChEBI" id="CHEBI:59789"/>
    </ligand>
</feature>
<feature type="binding site" evidence="1">
    <location>
        <position position="150"/>
    </location>
    <ligand>
        <name>S-adenosyl-L-methionine</name>
        <dbReference type="ChEBI" id="CHEBI:59789"/>
    </ligand>
</feature>
<protein>
    <recommendedName>
        <fullName evidence="1">Ribosomal RNA small subunit methyltransferase G</fullName>
        <ecNumber evidence="1">2.1.1.-</ecNumber>
    </recommendedName>
    <alternativeName>
        <fullName evidence="1">16S rRNA 7-methylguanosine methyltransferase</fullName>
        <shortName evidence="1">16S rRNA m7G methyltransferase</shortName>
    </alternativeName>
</protein>
<comment type="function">
    <text evidence="1">Specifically methylates the N7 position of a guanine in 16S rRNA.</text>
</comment>
<comment type="subcellular location">
    <subcellularLocation>
        <location evidence="1">Cytoplasm</location>
    </subcellularLocation>
</comment>
<comment type="similarity">
    <text evidence="1">Belongs to the methyltransferase superfamily. RNA methyltransferase RsmG family.</text>
</comment>
<name>RSMG_LIMF3</name>
<sequence>MNPEEFRQALLDHGIALTDAQMAQFARYYQLLVQTNEHLNLTAITAETEVYLKHFYDSLTGAFAYPKLQSQALTLCDIGAGAGFPSLPLKIAFPQLEVTIVDSLNKRINFLADLCDDLGLTGVYLVHDRAETFAAKGSPYREQFDLVTARAVARLVVLGELCLPAAKVGGAFLAYKASAVNDELKLATGAINKLGGQVAGTTKLTLPTKPEAEERNLVVIDKVAKTPGKYPRRPGVPAKKPLINV</sequence>
<dbReference type="EC" id="2.1.1.-" evidence="1"/>
<dbReference type="EMBL" id="AP008937">
    <property type="protein sequence ID" value="BAG26411.1"/>
    <property type="molecule type" value="Genomic_DNA"/>
</dbReference>
<dbReference type="RefSeq" id="WP_012390703.1">
    <property type="nucleotide sequence ID" value="NC_010610.1"/>
</dbReference>
<dbReference type="SMR" id="B2GF22"/>
<dbReference type="KEGG" id="lfe:LAF_0075"/>
<dbReference type="PATRIC" id="fig|334390.5.peg.79"/>
<dbReference type="eggNOG" id="COG0357">
    <property type="taxonomic scope" value="Bacteria"/>
</dbReference>
<dbReference type="HOGENOM" id="CLU_065341_0_2_9"/>
<dbReference type="Proteomes" id="UP000001697">
    <property type="component" value="Chromosome"/>
</dbReference>
<dbReference type="GO" id="GO:0005829">
    <property type="term" value="C:cytosol"/>
    <property type="evidence" value="ECO:0007669"/>
    <property type="project" value="TreeGrafter"/>
</dbReference>
<dbReference type="GO" id="GO:0070043">
    <property type="term" value="F:rRNA (guanine-N7-)-methyltransferase activity"/>
    <property type="evidence" value="ECO:0007669"/>
    <property type="project" value="UniProtKB-UniRule"/>
</dbReference>
<dbReference type="FunFam" id="3.40.50.150:FF:000041">
    <property type="entry name" value="Ribosomal RNA small subunit methyltransferase G"/>
    <property type="match status" value="1"/>
</dbReference>
<dbReference type="Gene3D" id="3.40.50.150">
    <property type="entry name" value="Vaccinia Virus protein VP39"/>
    <property type="match status" value="1"/>
</dbReference>
<dbReference type="HAMAP" id="MF_00074">
    <property type="entry name" value="16SrRNA_methyltr_G"/>
    <property type="match status" value="1"/>
</dbReference>
<dbReference type="InterPro" id="IPR003682">
    <property type="entry name" value="rRNA_ssu_MeTfrase_G"/>
</dbReference>
<dbReference type="InterPro" id="IPR029063">
    <property type="entry name" value="SAM-dependent_MTases_sf"/>
</dbReference>
<dbReference type="NCBIfam" id="TIGR00138">
    <property type="entry name" value="rsmG_gidB"/>
    <property type="match status" value="1"/>
</dbReference>
<dbReference type="PANTHER" id="PTHR31760">
    <property type="entry name" value="S-ADENOSYL-L-METHIONINE-DEPENDENT METHYLTRANSFERASES SUPERFAMILY PROTEIN"/>
    <property type="match status" value="1"/>
</dbReference>
<dbReference type="PANTHER" id="PTHR31760:SF0">
    <property type="entry name" value="S-ADENOSYL-L-METHIONINE-DEPENDENT METHYLTRANSFERASES SUPERFAMILY PROTEIN"/>
    <property type="match status" value="1"/>
</dbReference>
<dbReference type="Pfam" id="PF02527">
    <property type="entry name" value="GidB"/>
    <property type="match status" value="1"/>
</dbReference>
<dbReference type="PIRSF" id="PIRSF003078">
    <property type="entry name" value="GidB"/>
    <property type="match status" value="1"/>
</dbReference>
<dbReference type="SUPFAM" id="SSF53335">
    <property type="entry name" value="S-adenosyl-L-methionine-dependent methyltransferases"/>
    <property type="match status" value="1"/>
</dbReference>